<gene>
    <name evidence="1" type="primary">mtnN</name>
    <name type="ordered locus">SAOUHSC_01702</name>
</gene>
<evidence type="ECO:0000255" key="1">
    <source>
        <dbReference type="HAMAP-Rule" id="MF_01684"/>
    </source>
</evidence>
<sequence length="228" mass="24534">MIGIIGAMEEEVTILKNKLTQLSEISVAHVKFYTGILKDREVVITQSGIGKVNAAISTTLLINKFKPDVIINTGSAGALDESLNVGDVLISDDVKYHDADATAFGYEYGQIPQMPVAFQSSKPLIEKVSQVVQQQQLTAKVGLIVSGDSFIGSVEQRQKIKKAFPNAMAVEMEATAIAQTCYQFNVPFVVVRAVSDLANGEAEMSFEAFLEKAAVSSSQTVEALVSQL</sequence>
<dbReference type="EC" id="3.2.2.9" evidence="1"/>
<dbReference type="EMBL" id="CP000253">
    <property type="protein sequence ID" value="ABD30776.1"/>
    <property type="molecule type" value="Genomic_DNA"/>
</dbReference>
<dbReference type="RefSeq" id="WP_000579275.1">
    <property type="nucleotide sequence ID" value="NZ_LS483365.1"/>
</dbReference>
<dbReference type="RefSeq" id="YP_500212.1">
    <property type="nucleotide sequence ID" value="NC_007795.1"/>
</dbReference>
<dbReference type="SMR" id="Q2FXX8"/>
<dbReference type="STRING" id="93061.SAOUHSC_01702"/>
<dbReference type="PaxDb" id="1280-SAXN108_1624"/>
<dbReference type="GeneID" id="3921092"/>
<dbReference type="KEGG" id="sao:SAOUHSC_01702"/>
<dbReference type="PATRIC" id="fig|93061.5.peg.1551"/>
<dbReference type="eggNOG" id="COG0775">
    <property type="taxonomic scope" value="Bacteria"/>
</dbReference>
<dbReference type="HOGENOM" id="CLU_031248_2_2_9"/>
<dbReference type="OrthoDB" id="9792278at2"/>
<dbReference type="UniPathway" id="UPA00904">
    <property type="reaction ID" value="UER00871"/>
</dbReference>
<dbReference type="PRO" id="PR:Q2FXX8"/>
<dbReference type="Proteomes" id="UP000008816">
    <property type="component" value="Chromosome"/>
</dbReference>
<dbReference type="GO" id="GO:0005829">
    <property type="term" value="C:cytosol"/>
    <property type="evidence" value="ECO:0000318"/>
    <property type="project" value="GO_Central"/>
</dbReference>
<dbReference type="GO" id="GO:0008782">
    <property type="term" value="F:adenosylhomocysteine nucleosidase activity"/>
    <property type="evidence" value="ECO:0000318"/>
    <property type="project" value="GO_Central"/>
</dbReference>
<dbReference type="GO" id="GO:0008930">
    <property type="term" value="F:methylthioadenosine nucleosidase activity"/>
    <property type="evidence" value="ECO:0000318"/>
    <property type="project" value="GO_Central"/>
</dbReference>
<dbReference type="GO" id="GO:0019509">
    <property type="term" value="P:L-methionine salvage from methylthioadenosine"/>
    <property type="evidence" value="ECO:0007669"/>
    <property type="project" value="UniProtKB-UniRule"/>
</dbReference>
<dbReference type="GO" id="GO:0019284">
    <property type="term" value="P:L-methionine salvage from S-adenosylmethionine"/>
    <property type="evidence" value="ECO:0000318"/>
    <property type="project" value="GO_Central"/>
</dbReference>
<dbReference type="GO" id="GO:0009164">
    <property type="term" value="P:nucleoside catabolic process"/>
    <property type="evidence" value="ECO:0007669"/>
    <property type="project" value="InterPro"/>
</dbReference>
<dbReference type="CDD" id="cd09008">
    <property type="entry name" value="MTAN"/>
    <property type="match status" value="1"/>
</dbReference>
<dbReference type="FunFam" id="3.40.50.1580:FF:000001">
    <property type="entry name" value="MTA/SAH nucleosidase family protein"/>
    <property type="match status" value="1"/>
</dbReference>
<dbReference type="Gene3D" id="3.40.50.1580">
    <property type="entry name" value="Nucleoside phosphorylase domain"/>
    <property type="match status" value="1"/>
</dbReference>
<dbReference type="HAMAP" id="MF_01684">
    <property type="entry name" value="Salvage_MtnN"/>
    <property type="match status" value="1"/>
</dbReference>
<dbReference type="InterPro" id="IPR010049">
    <property type="entry name" value="MTA_SAH_Nsdase"/>
</dbReference>
<dbReference type="InterPro" id="IPR000845">
    <property type="entry name" value="Nucleoside_phosphorylase_d"/>
</dbReference>
<dbReference type="InterPro" id="IPR035994">
    <property type="entry name" value="Nucleoside_phosphorylase_sf"/>
</dbReference>
<dbReference type="NCBIfam" id="TIGR01704">
    <property type="entry name" value="MTA_SAH-Nsdase"/>
    <property type="match status" value="1"/>
</dbReference>
<dbReference type="NCBIfam" id="NF004079">
    <property type="entry name" value="PRK05584.1"/>
    <property type="match status" value="1"/>
</dbReference>
<dbReference type="PANTHER" id="PTHR46832">
    <property type="entry name" value="5'-METHYLTHIOADENOSINE/S-ADENOSYLHOMOCYSTEINE NUCLEOSIDASE"/>
    <property type="match status" value="1"/>
</dbReference>
<dbReference type="PANTHER" id="PTHR46832:SF1">
    <property type="entry name" value="5'-METHYLTHIOADENOSINE_S-ADENOSYLHOMOCYSTEINE NUCLEOSIDASE"/>
    <property type="match status" value="1"/>
</dbReference>
<dbReference type="Pfam" id="PF01048">
    <property type="entry name" value="PNP_UDP_1"/>
    <property type="match status" value="1"/>
</dbReference>
<dbReference type="SUPFAM" id="SSF53167">
    <property type="entry name" value="Purine and uridine phosphorylases"/>
    <property type="match status" value="1"/>
</dbReference>
<name>MTNN_STAA8</name>
<protein>
    <recommendedName>
        <fullName evidence="1">5'-methylthioadenosine/S-adenosylhomocysteine nucleosidase</fullName>
        <shortName evidence="1">MTA/SAH nucleosidase</shortName>
        <shortName evidence="1">MTAN</shortName>
        <ecNumber evidence="1">3.2.2.9</ecNumber>
    </recommendedName>
    <alternativeName>
        <fullName evidence="1">5'-deoxyadenosine nucleosidase</fullName>
        <shortName evidence="1">DOA nucleosidase</shortName>
        <shortName evidence="1">dAdo nucleosidase</shortName>
    </alternativeName>
    <alternativeName>
        <fullName evidence="1">5'-methylthioadenosine nucleosidase</fullName>
        <shortName evidence="1">MTA nucleosidase</shortName>
    </alternativeName>
    <alternativeName>
        <fullName evidence="1">S-adenosylhomocysteine nucleosidase</fullName>
        <shortName evidence="1">AdoHcy nucleosidase</shortName>
        <shortName evidence="1">SAH nucleosidase</shortName>
        <shortName evidence="1">SRH nucleosidase</shortName>
    </alternativeName>
</protein>
<organism>
    <name type="scientific">Staphylococcus aureus (strain NCTC 8325 / PS 47)</name>
    <dbReference type="NCBI Taxonomy" id="93061"/>
    <lineage>
        <taxon>Bacteria</taxon>
        <taxon>Bacillati</taxon>
        <taxon>Bacillota</taxon>
        <taxon>Bacilli</taxon>
        <taxon>Bacillales</taxon>
        <taxon>Staphylococcaceae</taxon>
        <taxon>Staphylococcus</taxon>
    </lineage>
</organism>
<proteinExistence type="inferred from homology"/>
<keyword id="KW-0028">Amino-acid biosynthesis</keyword>
<keyword id="KW-0378">Hydrolase</keyword>
<keyword id="KW-0486">Methionine biosynthesis</keyword>
<keyword id="KW-1185">Reference proteome</keyword>
<feature type="chain" id="PRO_0000359372" description="5'-methylthioadenosine/S-adenosylhomocysteine nucleosidase">
    <location>
        <begin position="1"/>
        <end position="228"/>
    </location>
</feature>
<feature type="active site" description="Proton acceptor" evidence="1">
    <location>
        <position position="11"/>
    </location>
</feature>
<feature type="active site" description="Proton donor" evidence="1">
    <location>
        <position position="196"/>
    </location>
</feature>
<feature type="binding site" evidence="1">
    <location>
        <position position="77"/>
    </location>
    <ligand>
        <name>substrate</name>
    </ligand>
</feature>
<feature type="binding site" evidence="1">
    <location>
        <position position="151"/>
    </location>
    <ligand>
        <name>substrate</name>
    </ligand>
</feature>
<feature type="binding site" evidence="1">
    <location>
        <begin position="172"/>
        <end position="173"/>
    </location>
    <ligand>
        <name>substrate</name>
    </ligand>
</feature>
<comment type="function">
    <text evidence="1">Catalyzes the irreversible cleavage of the glycosidic bond in both 5'-methylthioadenosine (MTA) and S-adenosylhomocysteine (SAH/AdoHcy) to adenine and the corresponding thioribose, 5'-methylthioribose and S-ribosylhomocysteine, respectively. Also cleaves 5'-deoxyadenosine, a toxic by-product of radical S-adenosylmethionine (SAM) enzymes, into 5-deoxyribose and adenine.</text>
</comment>
<comment type="catalytic activity">
    <reaction evidence="1">
        <text>S-adenosyl-L-homocysteine + H2O = S-(5-deoxy-D-ribos-5-yl)-L-homocysteine + adenine</text>
        <dbReference type="Rhea" id="RHEA:17805"/>
        <dbReference type="ChEBI" id="CHEBI:15377"/>
        <dbReference type="ChEBI" id="CHEBI:16708"/>
        <dbReference type="ChEBI" id="CHEBI:57856"/>
        <dbReference type="ChEBI" id="CHEBI:58195"/>
        <dbReference type="EC" id="3.2.2.9"/>
    </reaction>
</comment>
<comment type="catalytic activity">
    <reaction evidence="1">
        <text>S-methyl-5'-thioadenosine + H2O = 5-(methylsulfanyl)-D-ribose + adenine</text>
        <dbReference type="Rhea" id="RHEA:13617"/>
        <dbReference type="ChEBI" id="CHEBI:15377"/>
        <dbReference type="ChEBI" id="CHEBI:16708"/>
        <dbReference type="ChEBI" id="CHEBI:17509"/>
        <dbReference type="ChEBI" id="CHEBI:78440"/>
        <dbReference type="EC" id="3.2.2.9"/>
    </reaction>
</comment>
<comment type="catalytic activity">
    <reaction evidence="1">
        <text>5'-deoxyadenosine + H2O = 5-deoxy-D-ribose + adenine</text>
        <dbReference type="Rhea" id="RHEA:29859"/>
        <dbReference type="ChEBI" id="CHEBI:15377"/>
        <dbReference type="ChEBI" id="CHEBI:16708"/>
        <dbReference type="ChEBI" id="CHEBI:17319"/>
        <dbReference type="ChEBI" id="CHEBI:149540"/>
        <dbReference type="EC" id="3.2.2.9"/>
    </reaction>
    <physiologicalReaction direction="left-to-right" evidence="1">
        <dbReference type="Rhea" id="RHEA:29860"/>
    </physiologicalReaction>
</comment>
<comment type="pathway">
    <text evidence="1">Amino-acid biosynthesis; L-methionine biosynthesis via salvage pathway; S-methyl-5-thio-alpha-D-ribose 1-phosphate from S-methyl-5'-thioadenosine (hydrolase route): step 1/2.</text>
</comment>
<comment type="similarity">
    <text evidence="1">Belongs to the PNP/UDP phosphorylase family. MtnN subfamily.</text>
</comment>
<accession>Q2FXX8</accession>
<reference key="1">
    <citation type="book" date="2006" name="Gram positive pathogens, 2nd edition">
        <title>The Staphylococcus aureus NCTC 8325 genome.</title>
        <editorList>
            <person name="Fischetti V."/>
            <person name="Novick R."/>
            <person name="Ferretti J."/>
            <person name="Portnoy D."/>
            <person name="Rood J."/>
        </editorList>
        <authorList>
            <person name="Gillaspy A.F."/>
            <person name="Worrell V."/>
            <person name="Orvis J."/>
            <person name="Roe B.A."/>
            <person name="Dyer D.W."/>
            <person name="Iandolo J.J."/>
        </authorList>
    </citation>
    <scope>NUCLEOTIDE SEQUENCE [LARGE SCALE GENOMIC DNA]</scope>
    <source>
        <strain>NCTC 8325 / PS 47</strain>
    </source>
</reference>